<gene>
    <name evidence="1" type="primary">aaeB</name>
    <name type="ordered locus">SeHA_C3662</name>
</gene>
<keyword id="KW-0997">Cell inner membrane</keyword>
<keyword id="KW-1003">Cell membrane</keyword>
<keyword id="KW-0472">Membrane</keyword>
<keyword id="KW-0812">Transmembrane</keyword>
<keyword id="KW-1133">Transmembrane helix</keyword>
<keyword id="KW-0813">Transport</keyword>
<dbReference type="EMBL" id="CP001120">
    <property type="protein sequence ID" value="ACF67375.1"/>
    <property type="molecule type" value="Genomic_DNA"/>
</dbReference>
<dbReference type="RefSeq" id="WP_000510906.1">
    <property type="nucleotide sequence ID" value="NC_011083.1"/>
</dbReference>
<dbReference type="SMR" id="B4TJT8"/>
<dbReference type="KEGG" id="seh:SeHA_C3662"/>
<dbReference type="HOGENOM" id="CLU_027647_0_0_6"/>
<dbReference type="Proteomes" id="UP000001866">
    <property type="component" value="Chromosome"/>
</dbReference>
<dbReference type="GO" id="GO:0005886">
    <property type="term" value="C:plasma membrane"/>
    <property type="evidence" value="ECO:0007669"/>
    <property type="project" value="UniProtKB-SubCell"/>
</dbReference>
<dbReference type="GO" id="GO:0022857">
    <property type="term" value="F:transmembrane transporter activity"/>
    <property type="evidence" value="ECO:0007669"/>
    <property type="project" value="UniProtKB-UniRule"/>
</dbReference>
<dbReference type="GO" id="GO:0046942">
    <property type="term" value="P:carboxylic acid transport"/>
    <property type="evidence" value="ECO:0007669"/>
    <property type="project" value="InterPro"/>
</dbReference>
<dbReference type="HAMAP" id="MF_01545">
    <property type="entry name" value="AaeB"/>
    <property type="match status" value="1"/>
</dbReference>
<dbReference type="InterPro" id="IPR006726">
    <property type="entry name" value="PHBA_efflux_AaeB/fusaric-R"/>
</dbReference>
<dbReference type="InterPro" id="IPR023706">
    <property type="entry name" value="PHBA_efflux_pump_AaeB"/>
</dbReference>
<dbReference type="NCBIfam" id="NF007916">
    <property type="entry name" value="PRK10631.1"/>
    <property type="match status" value="1"/>
</dbReference>
<dbReference type="PANTHER" id="PTHR30509:SF9">
    <property type="entry name" value="MULTIDRUG RESISTANCE PROTEIN MDTO"/>
    <property type="match status" value="1"/>
</dbReference>
<dbReference type="PANTHER" id="PTHR30509">
    <property type="entry name" value="P-HYDROXYBENZOIC ACID EFFLUX PUMP SUBUNIT-RELATED"/>
    <property type="match status" value="1"/>
</dbReference>
<dbReference type="Pfam" id="PF04632">
    <property type="entry name" value="FUSC"/>
    <property type="match status" value="1"/>
</dbReference>
<comment type="function">
    <text evidence="1">Forms an efflux pump with AaeA. Could function as a metabolic relief valve, allowing to eliminate certain compounds when they accumulate to high levels in the cell.</text>
</comment>
<comment type="subcellular location">
    <subcellularLocation>
        <location evidence="1">Cell inner membrane</location>
        <topology evidence="1">Multi-pass membrane protein</topology>
    </subcellularLocation>
</comment>
<comment type="similarity">
    <text evidence="1">Belongs to the aromatic acid exporter ArAE (TC 2.A.85) family.</text>
</comment>
<reference key="1">
    <citation type="journal article" date="2011" name="J. Bacteriol.">
        <title>Comparative genomics of 28 Salmonella enterica isolates: evidence for CRISPR-mediated adaptive sublineage evolution.</title>
        <authorList>
            <person name="Fricke W.F."/>
            <person name="Mammel M.K."/>
            <person name="McDermott P.F."/>
            <person name="Tartera C."/>
            <person name="White D.G."/>
            <person name="Leclerc J.E."/>
            <person name="Ravel J."/>
            <person name="Cebula T.A."/>
        </authorList>
    </citation>
    <scope>NUCLEOTIDE SEQUENCE [LARGE SCALE GENOMIC DNA]</scope>
    <source>
        <strain>SL476</strain>
    </source>
</reference>
<sequence length="655" mass="73676">MGIFSIANQHIRFAVKLACAIVLALFIGFHFQLETPRWAVLTAAIVAAGPAFAAGGEPYSGAIRYRGMLRIIGTFIGCIAALIIIISMIRAPLLMILVCCVWAGFCTWISSLVRIENSYAWGLSGYTALIIVITIQMEPLLTPQFALERCSEIVIGIGCAILADLLFSPRSIKQEVDRELDSLLVAQYQLMQLCIKHGDSEEVDNAWGDLVRRTAALEGMRSNLNMESSRWVRANRRLKALNTLSLTLITQSCETYLIQNTRPELITDTFRELFETPVETVQDVHRQLKRMRRVIVWTGERETPVTLYSWVGAATRYLLLKRGVISNTKISATEEEILQGEPVVKVESAERHHAMVNFWRTTLSCILGTLFWLWTGWTSGNGAMVMIAVVTSLAMRLPNPRMVCIDFIYGTLAALPLGLLYFLVIIPNTQQSMLLLCLSLAVLGFFIGIEVQKRRLGSMGALASTINIIVLDNPMTFHFSQFLDSALGQIVGCMLAFIVILLVRDKSKDRTGRVLLNQFVSAAVSAMTTNVVRRKENRLPALYQQLFLLMNKFPGDLPKFRLALTMIIAHQRLRDAPIPVNEDLSVFHRQLRRTADHVISAGSDDKRRRYFGQLLDELDIYQEKLRIWEAPPQVTEPVKRLTGMLHKYQNALTDS</sequence>
<proteinExistence type="inferred from homology"/>
<feature type="chain" id="PRO_1000146744" description="p-hydroxybenzoic acid efflux pump subunit AaeB">
    <location>
        <begin position="1"/>
        <end position="655"/>
    </location>
</feature>
<feature type="transmembrane region" description="Helical" evidence="1">
    <location>
        <begin position="13"/>
        <end position="33"/>
    </location>
</feature>
<feature type="transmembrane region" description="Helical" evidence="1">
    <location>
        <begin position="38"/>
        <end position="58"/>
    </location>
</feature>
<feature type="transmembrane region" description="Helical" evidence="1">
    <location>
        <begin position="69"/>
        <end position="89"/>
    </location>
</feature>
<feature type="transmembrane region" description="Helical" evidence="1">
    <location>
        <begin position="93"/>
        <end position="113"/>
    </location>
</feature>
<feature type="transmembrane region" description="Helical" evidence="1">
    <location>
        <begin position="121"/>
        <end position="141"/>
    </location>
</feature>
<feature type="transmembrane region" description="Helical" evidence="1">
    <location>
        <begin position="152"/>
        <end position="172"/>
    </location>
</feature>
<feature type="transmembrane region" description="Helical" evidence="1">
    <location>
        <begin position="370"/>
        <end position="390"/>
    </location>
</feature>
<feature type="transmembrane region" description="Helical" evidence="1">
    <location>
        <begin position="407"/>
        <end position="427"/>
    </location>
</feature>
<feature type="transmembrane region" description="Helical" evidence="1">
    <location>
        <begin position="431"/>
        <end position="451"/>
    </location>
</feature>
<feature type="transmembrane region" description="Helical" evidence="1">
    <location>
        <begin position="459"/>
        <end position="479"/>
    </location>
</feature>
<feature type="transmembrane region" description="Helical" evidence="1">
    <location>
        <begin position="482"/>
        <end position="502"/>
    </location>
</feature>
<name>AAEB_SALHS</name>
<evidence type="ECO:0000255" key="1">
    <source>
        <dbReference type="HAMAP-Rule" id="MF_01545"/>
    </source>
</evidence>
<accession>B4TJT8</accession>
<protein>
    <recommendedName>
        <fullName evidence="1">p-hydroxybenzoic acid efflux pump subunit AaeB</fullName>
        <shortName evidence="1">pHBA efflux pump protein B</shortName>
    </recommendedName>
</protein>
<organism>
    <name type="scientific">Salmonella heidelberg (strain SL476)</name>
    <dbReference type="NCBI Taxonomy" id="454169"/>
    <lineage>
        <taxon>Bacteria</taxon>
        <taxon>Pseudomonadati</taxon>
        <taxon>Pseudomonadota</taxon>
        <taxon>Gammaproteobacteria</taxon>
        <taxon>Enterobacterales</taxon>
        <taxon>Enterobacteriaceae</taxon>
        <taxon>Salmonella</taxon>
    </lineage>
</organism>